<accession>P0DW92</accession>
<evidence type="ECO:0000250" key="1">
    <source>
        <dbReference type="UniProtKB" id="P0C278"/>
    </source>
</evidence>
<evidence type="ECO:0000250" key="2">
    <source>
        <dbReference type="UniProtKB" id="P83223"/>
    </source>
</evidence>
<evidence type="ECO:0000269" key="3">
    <source>
    </source>
</evidence>
<evidence type="ECO:0000303" key="4">
    <source>
    </source>
</evidence>
<evidence type="ECO:0000305" key="5"/>
<evidence type="ECO:0000305" key="6">
    <source>
    </source>
</evidence>
<evidence type="ECO:0000312" key="7">
    <source>
        <dbReference type="EMBL" id="AIV07243.1"/>
    </source>
</evidence>
<feature type="chain" id="PRO_0000456634" description="NADH:acrylate oxidoreductase">
    <location>
        <begin position="1"/>
        <end position="1004"/>
    </location>
</feature>
<feature type="active site" description="Proton donor" evidence="1">
    <location>
        <position position="834"/>
    </location>
</feature>
<feature type="binding site" evidence="2">
    <location>
        <position position="508"/>
    </location>
    <ligand>
        <name>FAD</name>
        <dbReference type="ChEBI" id="CHEBI:57692"/>
    </ligand>
</feature>
<feature type="binding site" evidence="2">
    <location>
        <position position="527"/>
    </location>
    <ligand>
        <name>FAD</name>
        <dbReference type="ChEBI" id="CHEBI:57692"/>
    </ligand>
</feature>
<feature type="binding site" evidence="2">
    <location>
        <position position="535"/>
    </location>
    <ligand>
        <name>FAD</name>
        <dbReference type="ChEBI" id="CHEBI:57692"/>
    </ligand>
</feature>
<feature type="binding site" evidence="2">
    <location>
        <position position="536"/>
    </location>
    <ligand>
        <name>FAD</name>
        <dbReference type="ChEBI" id="CHEBI:57692"/>
    </ligand>
</feature>
<feature type="binding site" evidence="2">
    <location>
        <position position="540"/>
    </location>
    <ligand>
        <name>FAD</name>
        <dbReference type="ChEBI" id="CHEBI:57692"/>
    </ligand>
</feature>
<feature type="binding site" evidence="2">
    <location>
        <position position="541"/>
    </location>
    <ligand>
        <name>FAD</name>
        <dbReference type="ChEBI" id="CHEBI:57692"/>
    </ligand>
</feature>
<feature type="binding site" evidence="2">
    <location>
        <position position="775"/>
    </location>
    <ligand>
        <name>FAD</name>
        <dbReference type="ChEBI" id="CHEBI:57692"/>
    </ligand>
</feature>
<feature type="binding site" evidence="2">
    <location>
        <position position="941"/>
    </location>
    <ligand>
        <name>FAD</name>
        <dbReference type="ChEBI" id="CHEBI:57692"/>
    </ligand>
</feature>
<feature type="binding site" evidence="2">
    <location>
        <position position="970"/>
    </location>
    <ligand>
        <name>FAD</name>
        <dbReference type="ChEBI" id="CHEBI:57692"/>
    </ligand>
</feature>
<feature type="binding site" evidence="2">
    <location>
        <position position="985"/>
    </location>
    <ligand>
        <name>FAD</name>
        <dbReference type="ChEBI" id="CHEBI:57692"/>
    </ligand>
</feature>
<feature type="binding site" evidence="2">
    <location>
        <position position="986"/>
    </location>
    <ligand>
        <name>FAD</name>
        <dbReference type="ChEBI" id="CHEBI:57692"/>
    </ligand>
</feature>
<feature type="modified residue" description="FMN phosphoryl threonine" evidence="3">
    <location>
        <position position="455"/>
    </location>
</feature>
<dbReference type="EC" id="1.3.1.125" evidence="3"/>
<dbReference type="EMBL" id="CP009468">
    <property type="protein sequence ID" value="AIV07243.1"/>
    <property type="molecule type" value="Genomic_DNA"/>
</dbReference>
<dbReference type="RefSeq" id="WP_069687654.1">
    <property type="nucleotide sequence ID" value="NZ_CP009468.1"/>
</dbReference>
<dbReference type="SMR" id="P0DW92"/>
<dbReference type="GO" id="GO:0016020">
    <property type="term" value="C:membrane"/>
    <property type="evidence" value="ECO:0007669"/>
    <property type="project" value="InterPro"/>
</dbReference>
<dbReference type="GO" id="GO:0010181">
    <property type="term" value="F:FMN binding"/>
    <property type="evidence" value="ECO:0007669"/>
    <property type="project" value="InterPro"/>
</dbReference>
<dbReference type="GO" id="GO:0016491">
    <property type="term" value="F:oxidoreductase activity"/>
    <property type="evidence" value="ECO:0007669"/>
    <property type="project" value="UniProtKB-KW"/>
</dbReference>
<dbReference type="CDD" id="cd04735">
    <property type="entry name" value="OYE_like_4_FMN"/>
    <property type="match status" value="1"/>
</dbReference>
<dbReference type="Gene3D" id="3.90.1010.20">
    <property type="match status" value="1"/>
</dbReference>
<dbReference type="Gene3D" id="3.20.20.70">
    <property type="entry name" value="Aldolase class I"/>
    <property type="match status" value="1"/>
</dbReference>
<dbReference type="Gene3D" id="3.50.50.60">
    <property type="entry name" value="FAD/NAD(P)-binding domain"/>
    <property type="match status" value="1"/>
</dbReference>
<dbReference type="Gene3D" id="3.90.700.10">
    <property type="entry name" value="Succinate dehydrogenase/fumarate reductase flavoprotein, catalytic domain"/>
    <property type="match status" value="1"/>
</dbReference>
<dbReference type="InterPro" id="IPR013785">
    <property type="entry name" value="Aldolase_TIM"/>
</dbReference>
<dbReference type="InterPro" id="IPR003953">
    <property type="entry name" value="FAD-dep_OxRdtase_2_FAD-bd"/>
</dbReference>
<dbReference type="InterPro" id="IPR050315">
    <property type="entry name" value="FAD-oxidoreductase_2"/>
</dbReference>
<dbReference type="InterPro" id="IPR036188">
    <property type="entry name" value="FAD/NAD-bd_sf"/>
</dbReference>
<dbReference type="InterPro" id="IPR010960">
    <property type="entry name" value="Flavocytochrome_c"/>
</dbReference>
<dbReference type="InterPro" id="IPR007329">
    <property type="entry name" value="FMN-bd"/>
</dbReference>
<dbReference type="InterPro" id="IPR001155">
    <property type="entry name" value="OxRdtase_FMN_N"/>
</dbReference>
<dbReference type="InterPro" id="IPR027477">
    <property type="entry name" value="Succ_DH/fumarate_Rdtase_cat_sf"/>
</dbReference>
<dbReference type="NCBIfam" id="TIGR01813">
    <property type="entry name" value="flavo_cyto_c"/>
    <property type="match status" value="1"/>
</dbReference>
<dbReference type="PANTHER" id="PTHR43400:SF7">
    <property type="entry name" value="FAD-DEPENDENT OXIDOREDUCTASE 2 FAD BINDING DOMAIN-CONTAINING PROTEIN"/>
    <property type="match status" value="1"/>
</dbReference>
<dbReference type="PANTHER" id="PTHR43400">
    <property type="entry name" value="FUMARATE REDUCTASE"/>
    <property type="match status" value="1"/>
</dbReference>
<dbReference type="Pfam" id="PF00890">
    <property type="entry name" value="FAD_binding_2"/>
    <property type="match status" value="2"/>
</dbReference>
<dbReference type="Pfam" id="PF04205">
    <property type="entry name" value="FMN_bind"/>
    <property type="match status" value="1"/>
</dbReference>
<dbReference type="Pfam" id="PF00724">
    <property type="entry name" value="Oxidored_FMN"/>
    <property type="match status" value="1"/>
</dbReference>
<dbReference type="PRINTS" id="PR00411">
    <property type="entry name" value="PNDRDTASEI"/>
</dbReference>
<dbReference type="SMART" id="SM00900">
    <property type="entry name" value="FMN_bind"/>
    <property type="match status" value="1"/>
</dbReference>
<dbReference type="SUPFAM" id="SSF51905">
    <property type="entry name" value="FAD/NAD(P)-binding domain"/>
    <property type="match status" value="1"/>
</dbReference>
<dbReference type="SUPFAM" id="SSF51395">
    <property type="entry name" value="FMN-linked oxidoreductases"/>
    <property type="match status" value="1"/>
</dbReference>
<dbReference type="SUPFAM" id="SSF56425">
    <property type="entry name" value="Succinate dehydrogenase/fumarate reductase flavoprotein, catalytic domain"/>
    <property type="match status" value="1"/>
</dbReference>
<organism>
    <name type="scientific">Vibrio harveyi</name>
    <name type="common">Beneckea harveyi</name>
    <dbReference type="NCBI Taxonomy" id="669"/>
    <lineage>
        <taxon>Bacteria</taxon>
        <taxon>Pseudomonadati</taxon>
        <taxon>Pseudomonadota</taxon>
        <taxon>Gammaproteobacteria</taxon>
        <taxon>Vibrionales</taxon>
        <taxon>Vibrionaceae</taxon>
        <taxon>Vibrio</taxon>
    </lineage>
</organism>
<name>ARD_VIBHA</name>
<reference key="1">
    <citation type="journal article" date="2015" name="Genome Announc.">
        <title>Complete Genome Sequence of the Bioluminescent Marine Bacterium Vibrio harveyi ATCC 33843 (392 [MAV]).</title>
        <authorList>
            <person name="Wang Z."/>
            <person name="Hervey W.J. IV"/>
            <person name="Kim S."/>
            <person name="Lin B."/>
            <person name="Vora G.J."/>
        </authorList>
    </citation>
    <scope>NUCLEOTIDE SEQUENCE [LARGE SCALE GENOMIC DNA]</scope>
    <source>
        <strain>ATCC 33843 / NCIMB 1871 / 392 / MAV</strain>
    </source>
</reference>
<reference key="2">
    <citation type="journal article" date="2022" name="Appl. Environ. Microbiol.">
        <title>A Novel, NADH-Dependent Acrylate Reductase in Vibrio harveyi.</title>
        <authorList>
            <person name="Bertsova Y.V."/>
            <person name="Serebryakova M.V."/>
            <person name="Baykov A.A."/>
            <person name="Bogachev A.V."/>
        </authorList>
    </citation>
    <scope>FUNCTION</scope>
    <scope>CATALYTIC ACTIVITY</scope>
    <scope>SUBSTRATE SPECIFICITY</scope>
    <scope>COFACTOR</scope>
    <scope>BIOPHYSICOCHEMICAL PROPERTIES</scope>
    <scope>INDUCTION</scope>
    <scope>DOMAIN</scope>
    <scope>FLAVINYLATION AT THR-455 (FMN PROSTHETIC GROUP AT THR-455)</scope>
    <source>
        <strain>ATCC 33843 / NCIMB 1871 / 392 / MAV</strain>
    </source>
</reference>
<keyword id="KW-0274">FAD</keyword>
<keyword id="KW-0285">Flavoprotein</keyword>
<keyword id="KW-0288">FMN</keyword>
<keyword id="KW-0560">Oxidoreductase</keyword>
<keyword id="KW-0597">Phosphoprotein</keyword>
<proteinExistence type="evidence at protein level"/>
<sequence>MAQLVDEIVFQSGVKLHNRIVMAPMTIQSAFFDGGVTQEMINYYAARSGGAGAIIVESAFVENYGRAFPGALGIDTDSKIAGLTKLADAIKAKGSKAILQIYHAGRMANPEFNGGHQPISASPVAALRDNAETPLEMTKEQIEEMIERFGDAVNRAILAGFDGVEIHGANTYLIQQFFSPHSNRRNDKWGGNIERRTSFPLAVLAKTKQVAEQHNKSDFIIGYRFSPEEIEQPGIRFDDTMFLLDKLATHGLDYFHFSMGSWLRNSIVTPEDQEPLIDKYRKLQSESVAKVPVIGVGGIAQRKDAENALEQGYDMVSVGKGYLVEPTWANKALNDETCAEFADIAQQEALQIPTPLWEIMDYMIVDSAAEALKHQRIKELQNVPIKFNSGEYTAYGRGHNGDLPVTVTFSEDKILDIVVDSSKESDGIANPAFERIPQQILDGQTLNIDVISGATVSSQAVLDGVSNAVDLAGGNSEALRCKAKEAVAWSSKTIEETVDIVVVGGGGAGLSATLTALDKGKSVVLLEKFPAIGGNTVRTGGWVNAAEPKWQGDFPALPGEKETLMLLAKTAESEFSGEYLEDFKVLKAQLDGYFTDLENGKQYLFDSVELHRIQTYLGGKRTDLNGESIYGQYDLVETLTSRSMESIDWLSEKGIDFDRSVVEIPVGALWRRAHKPKRPKGVEFIDKLSKRIQEQNGRIITDTRATDLMVDNGKVVGIKAVQADGTELILHVNHGVVLASGGFGANTQMIKKYNTYWKEIADDIKTTNSPALVGDGIEIGEKAGAELVGMGFVQLMPVGDPKSGALLTGLIVPPENFVFVNKQGKRFVDECGSRDVLSEAFFDNGGLIYMIADENIRQTAANTSDETIEREIKEGIIIQADTLEELAEKIGVPTQELTNTIAQYNACVDAGQDPEFHKSAFGLKVEKAPFYATPRQPSVHHTMGGLKIDTKARVIGKDGEVIQGLYAAGEVTGGIHAGNRLGGNALIDIFTYGRIAGESASDLV</sequence>
<protein>
    <recommendedName>
        <fullName evidence="4">NADH:acrylate oxidoreductase</fullName>
        <shortName evidence="4">ARD</shortName>
        <ecNumber evidence="3">1.3.1.125</ecNumber>
    </recommendedName>
    <alternativeName>
        <fullName evidence="4">NADH-dependent acrylate reductase</fullName>
    </alternativeName>
</protein>
<comment type="function">
    <text evidence="3">Catalyzes the NADH-dependent reduction of acrylate to propanoate. The principal role of ARD in Vibrio seems to be the energy-saving detoxification of acrylate coming from the environment. May also use acrylate as the terminal electron acceptor for NADH regeneration at oxygen deficiency. NADPH cannot replace NADH as the electron donor. Is also able to reduce methacrylate in vitro, but with a much lower efficiency.</text>
</comment>
<comment type="catalytic activity">
    <reaction evidence="3">
        <text>acrylate + NADH + H(+) = propanoate + NAD(+)</text>
        <dbReference type="Rhea" id="RHEA:72699"/>
        <dbReference type="ChEBI" id="CHEBI:15378"/>
        <dbReference type="ChEBI" id="CHEBI:17272"/>
        <dbReference type="ChEBI" id="CHEBI:37080"/>
        <dbReference type="ChEBI" id="CHEBI:57540"/>
        <dbReference type="ChEBI" id="CHEBI:57945"/>
        <dbReference type="EC" id="1.3.1.125"/>
    </reaction>
    <physiologicalReaction direction="left-to-right" evidence="6">
        <dbReference type="Rhea" id="RHEA:72700"/>
    </physiologicalReaction>
</comment>
<comment type="cofactor">
    <cofactor evidence="3">
        <name>FAD</name>
        <dbReference type="ChEBI" id="CHEBI:57692"/>
    </cofactor>
    <text evidence="3">Binds 1 FAD per subunit.</text>
</comment>
<comment type="cofactor">
    <cofactor evidence="3">
        <name>FMN</name>
        <dbReference type="ChEBI" id="CHEBI:58210"/>
    </cofactor>
    <text evidence="3">Binds 2 FMN prosthetic groups per subunit. 1 FMN is bound covalently, while the other is non-covalent.</text>
</comment>
<comment type="biophysicochemical properties">
    <kinetics>
        <KM evidence="3">14 uM for NADH</KM>
        <KM evidence="3">16 uM for acrylate</KM>
        <KM evidence="3">690 uM for methacrylate</KM>
        <text>kcat is 19 sec(-1) with acrylate as substrate. kcat is 2.5 sec(-1) with methacrylate as substrate.</text>
    </kinetics>
    <phDependence>
        <text evidence="3">Optimum pH is 6.5-7.0.</text>
    </phDependence>
</comment>
<comment type="induction">
    <text evidence="3">Is maximally expressed under anaerobic conditions in the presence of acrylate. Under aerobic conditions, is highly induced by acrylate.</text>
</comment>
<comment type="domain">
    <text evidence="6">Consists of three domains. The first domain of ARD (Oxidored_FMN, PF00724) carries a non-covalently bound FMN and is used for NADH oxidation. The second, FMN_bind domain (PF04205) contains a covalently bound FMN, that acts as an electron carrier between the two other domains of ARD. The C-terminal FAD_binding_2 domain contains a non-covalently bound FAD and forms a site for acrylate reduction.</text>
</comment>
<comment type="PTM">
    <text evidence="3">Is flavinylated on Thr-455 by ApbE, encoded in a neighboring gene. Flavinylation is essential for catalytic activity.</text>
</comment>
<comment type="similarity">
    <text evidence="5">Belongs to the FAD-dependent oxidoreductase 2 family. FRD/SDH subfamily.</text>
</comment>
<gene>
    <name evidence="4" type="primary">ard</name>
    <name evidence="7" type="ORF">LA59_17425</name>
</gene>